<sequence>MSAKIKSGDDVIVLTGKDKGKIGKVIKVIARDAKKKVIVSGVNVHKRHTKPKAGSSGGILNKELAIDISNVATLDPKYKTPTRVGFKVIDGRKVRFAKVSGEVID</sequence>
<organism>
    <name type="scientific">Wolbachia sp. subsp. Drosophila simulans (strain wRi)</name>
    <dbReference type="NCBI Taxonomy" id="66084"/>
    <lineage>
        <taxon>Bacteria</taxon>
        <taxon>Pseudomonadati</taxon>
        <taxon>Pseudomonadota</taxon>
        <taxon>Alphaproteobacteria</taxon>
        <taxon>Rickettsiales</taxon>
        <taxon>Anaplasmataceae</taxon>
        <taxon>Wolbachieae</taxon>
        <taxon>Wolbachia</taxon>
    </lineage>
</organism>
<reference key="1">
    <citation type="journal article" date="2009" name="Proc. Natl. Acad. Sci. U.S.A.">
        <title>The mosaic genome structure of the Wolbachia wRi strain infecting Drosophila simulans.</title>
        <authorList>
            <person name="Klasson L."/>
            <person name="Westberg J."/>
            <person name="Sapountzis P."/>
            <person name="Naeslund K."/>
            <person name="Lutnaes Y."/>
            <person name="Darby A.C."/>
            <person name="Veneti Z."/>
            <person name="Chen L."/>
            <person name="Braig H.R."/>
            <person name="Garrett R."/>
            <person name="Bourtzis K."/>
            <person name="Andersson S.G."/>
        </authorList>
    </citation>
    <scope>NUCLEOTIDE SEQUENCE [LARGE SCALE GENOMIC DNA]</scope>
    <source>
        <strain>wRi</strain>
    </source>
</reference>
<proteinExistence type="inferred from homology"/>
<comment type="function">
    <text evidence="1">One of two assembly initiator proteins, it binds directly to the 5'-end of the 23S rRNA, where it nucleates assembly of the 50S subunit.</text>
</comment>
<comment type="function">
    <text evidence="1">One of the proteins that surrounds the polypeptide exit tunnel on the outside of the subunit.</text>
</comment>
<comment type="subunit">
    <text evidence="1">Part of the 50S ribosomal subunit.</text>
</comment>
<comment type="similarity">
    <text evidence="1">Belongs to the universal ribosomal protein uL24 family.</text>
</comment>
<evidence type="ECO:0000255" key="1">
    <source>
        <dbReference type="HAMAP-Rule" id="MF_01326"/>
    </source>
</evidence>
<evidence type="ECO:0000305" key="2"/>
<protein>
    <recommendedName>
        <fullName evidence="1">Large ribosomal subunit protein uL24</fullName>
    </recommendedName>
    <alternativeName>
        <fullName evidence="2">50S ribosomal protein L24</fullName>
    </alternativeName>
</protein>
<gene>
    <name evidence="1" type="primary">rplX</name>
    <name type="ordered locus">WRi_005080</name>
</gene>
<feature type="chain" id="PRO_1000165975" description="Large ribosomal subunit protein uL24">
    <location>
        <begin position="1"/>
        <end position="105"/>
    </location>
</feature>
<name>RL24_WOLWR</name>
<keyword id="KW-0687">Ribonucleoprotein</keyword>
<keyword id="KW-0689">Ribosomal protein</keyword>
<keyword id="KW-0694">RNA-binding</keyword>
<keyword id="KW-0699">rRNA-binding</keyword>
<accession>C0R2Z8</accession>
<dbReference type="EMBL" id="CP001391">
    <property type="protein sequence ID" value="ACN95290.1"/>
    <property type="molecule type" value="Genomic_DNA"/>
</dbReference>
<dbReference type="RefSeq" id="WP_006279347.1">
    <property type="nucleotide sequence ID" value="NZ_MKIF01000201.1"/>
</dbReference>
<dbReference type="SMR" id="C0R2Z8"/>
<dbReference type="STRING" id="66084.WRi_005080"/>
<dbReference type="GeneID" id="70036153"/>
<dbReference type="KEGG" id="wri:WRi_005080"/>
<dbReference type="HOGENOM" id="CLU_093315_2_2_5"/>
<dbReference type="Proteomes" id="UP000001293">
    <property type="component" value="Chromosome"/>
</dbReference>
<dbReference type="GO" id="GO:1990904">
    <property type="term" value="C:ribonucleoprotein complex"/>
    <property type="evidence" value="ECO:0007669"/>
    <property type="project" value="UniProtKB-KW"/>
</dbReference>
<dbReference type="GO" id="GO:0005840">
    <property type="term" value="C:ribosome"/>
    <property type="evidence" value="ECO:0007669"/>
    <property type="project" value="UniProtKB-KW"/>
</dbReference>
<dbReference type="GO" id="GO:0019843">
    <property type="term" value="F:rRNA binding"/>
    <property type="evidence" value="ECO:0007669"/>
    <property type="project" value="UniProtKB-UniRule"/>
</dbReference>
<dbReference type="GO" id="GO:0003735">
    <property type="term" value="F:structural constituent of ribosome"/>
    <property type="evidence" value="ECO:0007669"/>
    <property type="project" value="InterPro"/>
</dbReference>
<dbReference type="GO" id="GO:0006412">
    <property type="term" value="P:translation"/>
    <property type="evidence" value="ECO:0007669"/>
    <property type="project" value="UniProtKB-UniRule"/>
</dbReference>
<dbReference type="CDD" id="cd06089">
    <property type="entry name" value="KOW_RPL26"/>
    <property type="match status" value="1"/>
</dbReference>
<dbReference type="Gene3D" id="2.30.30.30">
    <property type="match status" value="1"/>
</dbReference>
<dbReference type="HAMAP" id="MF_01326_B">
    <property type="entry name" value="Ribosomal_uL24_B"/>
    <property type="match status" value="1"/>
</dbReference>
<dbReference type="InterPro" id="IPR005824">
    <property type="entry name" value="KOW"/>
</dbReference>
<dbReference type="InterPro" id="IPR014722">
    <property type="entry name" value="Rib_uL2_dom2"/>
</dbReference>
<dbReference type="InterPro" id="IPR003256">
    <property type="entry name" value="Ribosomal_uL24"/>
</dbReference>
<dbReference type="InterPro" id="IPR005825">
    <property type="entry name" value="Ribosomal_uL24_CS"/>
</dbReference>
<dbReference type="InterPro" id="IPR041988">
    <property type="entry name" value="Ribosomal_uL24_KOW"/>
</dbReference>
<dbReference type="InterPro" id="IPR008991">
    <property type="entry name" value="Translation_prot_SH3-like_sf"/>
</dbReference>
<dbReference type="NCBIfam" id="TIGR01079">
    <property type="entry name" value="rplX_bact"/>
    <property type="match status" value="1"/>
</dbReference>
<dbReference type="PANTHER" id="PTHR12903">
    <property type="entry name" value="MITOCHONDRIAL RIBOSOMAL PROTEIN L24"/>
    <property type="match status" value="1"/>
</dbReference>
<dbReference type="Pfam" id="PF17136">
    <property type="entry name" value="ribosomal_L24"/>
    <property type="match status" value="1"/>
</dbReference>
<dbReference type="SMART" id="SM00739">
    <property type="entry name" value="KOW"/>
    <property type="match status" value="1"/>
</dbReference>
<dbReference type="SUPFAM" id="SSF50104">
    <property type="entry name" value="Translation proteins SH3-like domain"/>
    <property type="match status" value="1"/>
</dbReference>
<dbReference type="PROSITE" id="PS01108">
    <property type="entry name" value="RIBOSOMAL_L24"/>
    <property type="match status" value="1"/>
</dbReference>